<protein>
    <recommendedName>
        <fullName>General transcription factor IIH subunit 1</fullName>
    </recommendedName>
    <alternativeName>
        <fullName>Basic transcription factor 2 62 kDa subunit</fullName>
        <shortName>BTF2 p62</shortName>
    </alternativeName>
    <alternativeName>
        <fullName>General transcription factor IIH polypeptide 1</fullName>
    </alternativeName>
    <alternativeName>
        <fullName>TFIIH basal transcription factor complex p62 subunit</fullName>
    </alternativeName>
</protein>
<comment type="function">
    <text evidence="4 8">Component of the general transcription and DNA repair factor IIH (TFIIH) core complex, which is involved in general and transcription-coupled nucleotide excision repair (NER) of damaged DNA and, when complexed to CAK, in RNA transcription by RNA polymerase II. In NER, TFIIH acts by opening DNA around the lesion to allow the excision of the damaged oligonucleotide and its replacement by a new DNA fragment. In transcription, TFIIH has an essential role in transcription initiation. When the pre-initiation complex (PIC) has been established, TFIIH is required for promoter opening and promoter escape. Phosphorylation of the C-terminal tail (CTD) of the largest subunit of RNA polymerase II by the kinase module CAK controls the initiation of transcription.</text>
</comment>
<comment type="subunit">
    <text evidence="4 5 8">Component of the 7-subunit TFIIH core complex composed of XPB/ERCC3, XPD/ERCC2, GTF2H1, GTF2H2, GTF2H3, GTF2H4 and GTF2H5, which is active in NER. The core complex associates with the 3-subunit CDK-activating kinase (CAK) module composed of CCNH/cyclin H, CDK7 and MNAT1 to form the 10-subunit holoenzyme (holo-TFIIH) active in transcription. Interacts with PUF60.</text>
</comment>
<comment type="subunit">
    <text evidence="6 7">(Microbial infection) Interacts with Rift valley fever virus NSs (via OmegaXaV motif); the interaction leads to TFIIH complex proteasomal degradation.</text>
</comment>
<comment type="interaction">
    <interactant intactId="EBI-715539">
        <id>P32780</id>
    </interactant>
    <interactant intactId="EBI-11522760">
        <id>Q6RW13-2</id>
        <label>AGTRAP</label>
    </interactant>
    <organismsDiffer>false</organismsDiffer>
    <experiments>3</experiments>
</comment>
<comment type="interaction">
    <interactant intactId="EBI-715539">
        <id>P32780</id>
    </interactant>
    <interactant intactId="EBI-769261">
        <id>Q96JC9</id>
        <label>EAF1</label>
    </interactant>
    <organismsDiffer>false</organismsDiffer>
    <experiments>3</experiments>
</comment>
<comment type="interaction">
    <interactant intactId="EBI-715539">
        <id>P32780</id>
    </interactant>
    <interactant intactId="EBI-701903">
        <id>Q14192</id>
        <label>FHL2</label>
    </interactant>
    <organismsDiffer>false</organismsDiffer>
    <experiments>3</experiments>
</comment>
<comment type="interaction">
    <interactant intactId="EBI-715539">
        <id>P32780</id>
    </interactant>
    <interactant intactId="EBI-5462215">
        <id>P29083</id>
        <label>GTF2E1</label>
    </interactant>
    <organismsDiffer>false</organismsDiffer>
    <experiments>21</experiments>
</comment>
<comment type="interaction">
    <interactant intactId="EBI-715539">
        <id>P32780</id>
    </interactant>
    <interactant intactId="EBI-1565170">
        <id>Q13888</id>
        <label>GTF2H2</label>
    </interactant>
    <organismsDiffer>false</organismsDiffer>
    <experiments>7</experiments>
</comment>
<comment type="interaction">
    <interactant intactId="EBI-715539">
        <id>P32780</id>
    </interactant>
    <interactant intactId="EBI-8284732">
        <id>Q13351</id>
        <label>KLF1</label>
    </interactant>
    <organismsDiffer>false</organismsDiffer>
    <experiments>2</experiments>
</comment>
<comment type="interaction">
    <interactant intactId="EBI-715539">
        <id>P32780</id>
    </interactant>
    <interactant intactId="EBI-21591415">
        <id>P13473-2</id>
        <label>LAMP2</label>
    </interactant>
    <organismsDiffer>false</organismsDiffer>
    <experiments>3</experiments>
</comment>
<comment type="interaction">
    <interactant intactId="EBI-715539">
        <id>P32780</id>
    </interactant>
    <interactant intactId="EBI-5280197">
        <id>O75400-2</id>
        <label>PRPF40A</label>
    </interactant>
    <organismsDiffer>false</organismsDiffer>
    <experiments>3</experiments>
</comment>
<comment type="interaction">
    <interactant intactId="EBI-715539">
        <id>P32780</id>
    </interactant>
    <interactant intactId="EBI-2623095">
        <id>Q9Y371</id>
        <label>SH3GLB1</label>
    </interactant>
    <organismsDiffer>false</organismsDiffer>
    <experiments>3</experiments>
</comment>
<comment type="interaction">
    <interactant intactId="EBI-715539">
        <id>P32780</id>
    </interactant>
    <interactant intactId="EBI-366083">
        <id>P04637</id>
        <label>TP53</label>
    </interactant>
    <organismsDiffer>false</organismsDiffer>
    <experiments>12</experiments>
</comment>
<comment type="interaction">
    <interactant intactId="EBI-715539">
        <id>P32780</id>
    </interactant>
    <interactant intactId="EBI-372610">
        <id>Q01831</id>
        <label>XPC</label>
    </interactant>
    <organismsDiffer>false</organismsDiffer>
    <experiments>3</experiments>
</comment>
<comment type="interaction">
    <interactant intactId="EBI-715539">
        <id>P32780</id>
    </interactant>
    <interactant intactId="EBI-15950383">
        <id>Q01831-1</id>
        <label>XPC</label>
    </interactant>
    <organismsDiffer>false</organismsDiffer>
    <experiments>3</experiments>
</comment>
<comment type="subcellular location">
    <subcellularLocation>
        <location>Nucleus</location>
    </subcellularLocation>
</comment>
<comment type="alternative products">
    <event type="alternative splicing"/>
    <isoform>
        <id>P32780-1</id>
        <name>1</name>
        <sequence type="displayed"/>
    </isoform>
    <isoform>
        <id>P32780-2</id>
        <name>2</name>
        <sequence type="described" ref="VSP_056562"/>
    </isoform>
</comment>
<comment type="PTM">
    <text evidence="7">(Microbial infection) Upon Rift valley fever virus infection, interacts with NSs leading to ubiquitination by the NSs-FBXO3 E3 ligase and proteasome-dependent degradation.</text>
</comment>
<comment type="similarity">
    <text evidence="11">Belongs to the TFB1 family.</text>
</comment>
<reference key="1">
    <citation type="journal article" date="1992" name="Science">
        <title>Cloning of the 62-kilodalton component of basic transcription factor BTF2.</title>
        <authorList>
            <person name="Fischer L."/>
            <person name="Gerard M."/>
            <person name="Chalut C."/>
            <person name="Lutz Y."/>
            <person name="Humbert S."/>
            <person name="Kanno M."/>
            <person name="Chambon P."/>
            <person name="Egly J.-M."/>
        </authorList>
    </citation>
    <scope>NUCLEOTIDE SEQUENCE [MRNA] (ISOFORM 1)</scope>
</reference>
<reference key="2">
    <citation type="journal article" date="2004" name="Nat. Genet.">
        <title>Complete sequencing and characterization of 21,243 full-length human cDNAs.</title>
        <authorList>
            <person name="Ota T."/>
            <person name="Suzuki Y."/>
            <person name="Nishikawa T."/>
            <person name="Otsuki T."/>
            <person name="Sugiyama T."/>
            <person name="Irie R."/>
            <person name="Wakamatsu A."/>
            <person name="Hayashi K."/>
            <person name="Sato H."/>
            <person name="Nagai K."/>
            <person name="Kimura K."/>
            <person name="Makita H."/>
            <person name="Sekine M."/>
            <person name="Obayashi M."/>
            <person name="Nishi T."/>
            <person name="Shibahara T."/>
            <person name="Tanaka T."/>
            <person name="Ishii S."/>
            <person name="Yamamoto J."/>
            <person name="Saito K."/>
            <person name="Kawai Y."/>
            <person name="Isono Y."/>
            <person name="Nakamura Y."/>
            <person name="Nagahari K."/>
            <person name="Murakami K."/>
            <person name="Yasuda T."/>
            <person name="Iwayanagi T."/>
            <person name="Wagatsuma M."/>
            <person name="Shiratori A."/>
            <person name="Sudo H."/>
            <person name="Hosoiri T."/>
            <person name="Kaku Y."/>
            <person name="Kodaira H."/>
            <person name="Kondo H."/>
            <person name="Sugawara M."/>
            <person name="Takahashi M."/>
            <person name="Kanda K."/>
            <person name="Yokoi T."/>
            <person name="Furuya T."/>
            <person name="Kikkawa E."/>
            <person name="Omura Y."/>
            <person name="Abe K."/>
            <person name="Kamihara K."/>
            <person name="Katsuta N."/>
            <person name="Sato K."/>
            <person name="Tanikawa M."/>
            <person name="Yamazaki M."/>
            <person name="Ninomiya K."/>
            <person name="Ishibashi T."/>
            <person name="Yamashita H."/>
            <person name="Murakawa K."/>
            <person name="Fujimori K."/>
            <person name="Tanai H."/>
            <person name="Kimata M."/>
            <person name="Watanabe M."/>
            <person name="Hiraoka S."/>
            <person name="Chiba Y."/>
            <person name="Ishida S."/>
            <person name="Ono Y."/>
            <person name="Takiguchi S."/>
            <person name="Watanabe S."/>
            <person name="Yosida M."/>
            <person name="Hotuta T."/>
            <person name="Kusano J."/>
            <person name="Kanehori K."/>
            <person name="Takahashi-Fujii A."/>
            <person name="Hara H."/>
            <person name="Tanase T.-O."/>
            <person name="Nomura Y."/>
            <person name="Togiya S."/>
            <person name="Komai F."/>
            <person name="Hara R."/>
            <person name="Takeuchi K."/>
            <person name="Arita M."/>
            <person name="Imose N."/>
            <person name="Musashino K."/>
            <person name="Yuuki H."/>
            <person name="Oshima A."/>
            <person name="Sasaki N."/>
            <person name="Aotsuka S."/>
            <person name="Yoshikawa Y."/>
            <person name="Matsunawa H."/>
            <person name="Ichihara T."/>
            <person name="Shiohata N."/>
            <person name="Sano S."/>
            <person name="Moriya S."/>
            <person name="Momiyama H."/>
            <person name="Satoh N."/>
            <person name="Takami S."/>
            <person name="Terashima Y."/>
            <person name="Suzuki O."/>
            <person name="Nakagawa S."/>
            <person name="Senoh A."/>
            <person name="Mizoguchi H."/>
            <person name="Goto Y."/>
            <person name="Shimizu F."/>
            <person name="Wakebe H."/>
            <person name="Hishigaki H."/>
            <person name="Watanabe T."/>
            <person name="Sugiyama A."/>
            <person name="Takemoto M."/>
            <person name="Kawakami B."/>
            <person name="Yamazaki M."/>
            <person name="Watanabe K."/>
            <person name="Kumagai A."/>
            <person name="Itakura S."/>
            <person name="Fukuzumi Y."/>
            <person name="Fujimori Y."/>
            <person name="Komiyama M."/>
            <person name="Tashiro H."/>
            <person name="Tanigami A."/>
            <person name="Fujiwara T."/>
            <person name="Ono T."/>
            <person name="Yamada K."/>
            <person name="Fujii Y."/>
            <person name="Ozaki K."/>
            <person name="Hirao M."/>
            <person name="Ohmori Y."/>
            <person name="Kawabata A."/>
            <person name="Hikiji T."/>
            <person name="Kobatake N."/>
            <person name="Inagaki H."/>
            <person name="Ikema Y."/>
            <person name="Okamoto S."/>
            <person name="Okitani R."/>
            <person name="Kawakami T."/>
            <person name="Noguchi S."/>
            <person name="Itoh T."/>
            <person name="Shigeta K."/>
            <person name="Senba T."/>
            <person name="Matsumura K."/>
            <person name="Nakajima Y."/>
            <person name="Mizuno T."/>
            <person name="Morinaga M."/>
            <person name="Sasaki M."/>
            <person name="Togashi T."/>
            <person name="Oyama M."/>
            <person name="Hata H."/>
            <person name="Watanabe M."/>
            <person name="Komatsu T."/>
            <person name="Mizushima-Sugano J."/>
            <person name="Satoh T."/>
            <person name="Shirai Y."/>
            <person name="Takahashi Y."/>
            <person name="Nakagawa K."/>
            <person name="Okumura K."/>
            <person name="Nagase T."/>
            <person name="Nomura N."/>
            <person name="Kikuchi H."/>
            <person name="Masuho Y."/>
            <person name="Yamashita R."/>
            <person name="Nakai K."/>
            <person name="Yada T."/>
            <person name="Nakamura Y."/>
            <person name="Ohara O."/>
            <person name="Isogai T."/>
            <person name="Sugano S."/>
        </authorList>
    </citation>
    <scope>NUCLEOTIDE SEQUENCE [LARGE SCALE MRNA] (ISOFORMS 1 AND 2)</scope>
    <source>
        <tissue>Hippocampus</tissue>
        <tissue>Liver</tissue>
    </source>
</reference>
<reference key="3">
    <citation type="submission" date="2002-10" db="EMBL/GenBank/DDBJ databases">
        <authorList>
            <consortium name="NIEHS SNPs program"/>
        </authorList>
    </citation>
    <scope>NUCLEOTIDE SEQUENCE [GENOMIC DNA]</scope>
    <scope>VARIANTS TRP-234; PHE-285 AND VAL-517</scope>
</reference>
<reference key="4">
    <citation type="submission" date="2004-06" db="EMBL/GenBank/DDBJ databases">
        <title>Cloning of human full open reading frames in Gateway(TM) system entry vector (pDONR201).</title>
        <authorList>
            <person name="Ebert L."/>
            <person name="Schick M."/>
            <person name="Neubert P."/>
            <person name="Schatten R."/>
            <person name="Henze S."/>
            <person name="Korn B."/>
        </authorList>
    </citation>
    <scope>NUCLEOTIDE SEQUENCE [LARGE SCALE MRNA] (ISOFORM 1)</scope>
</reference>
<reference key="5">
    <citation type="journal article" date="2006" name="Nature">
        <title>Human chromosome 11 DNA sequence and analysis including novel gene identification.</title>
        <authorList>
            <person name="Taylor T.D."/>
            <person name="Noguchi H."/>
            <person name="Totoki Y."/>
            <person name="Toyoda A."/>
            <person name="Kuroki Y."/>
            <person name="Dewar K."/>
            <person name="Lloyd C."/>
            <person name="Itoh T."/>
            <person name="Takeda T."/>
            <person name="Kim D.-W."/>
            <person name="She X."/>
            <person name="Barlow K.F."/>
            <person name="Bloom T."/>
            <person name="Bruford E."/>
            <person name="Chang J.L."/>
            <person name="Cuomo C.A."/>
            <person name="Eichler E."/>
            <person name="FitzGerald M.G."/>
            <person name="Jaffe D.B."/>
            <person name="LaButti K."/>
            <person name="Nicol R."/>
            <person name="Park H.-S."/>
            <person name="Seaman C."/>
            <person name="Sougnez C."/>
            <person name="Yang X."/>
            <person name="Zimmer A.R."/>
            <person name="Zody M.C."/>
            <person name="Birren B.W."/>
            <person name="Nusbaum C."/>
            <person name="Fujiyama A."/>
            <person name="Hattori M."/>
            <person name="Rogers J."/>
            <person name="Lander E.S."/>
            <person name="Sakaki Y."/>
        </authorList>
    </citation>
    <scope>NUCLEOTIDE SEQUENCE [LARGE SCALE GENOMIC DNA]</scope>
</reference>
<reference key="6">
    <citation type="submission" date="2005-09" db="EMBL/GenBank/DDBJ databases">
        <authorList>
            <person name="Mural R.J."/>
            <person name="Istrail S."/>
            <person name="Sutton G.G."/>
            <person name="Florea L."/>
            <person name="Halpern A.L."/>
            <person name="Mobarry C.M."/>
            <person name="Lippert R."/>
            <person name="Walenz B."/>
            <person name="Shatkay H."/>
            <person name="Dew I."/>
            <person name="Miller J.R."/>
            <person name="Flanigan M.J."/>
            <person name="Edwards N.J."/>
            <person name="Bolanos R."/>
            <person name="Fasulo D."/>
            <person name="Halldorsson B.V."/>
            <person name="Hannenhalli S."/>
            <person name="Turner R."/>
            <person name="Yooseph S."/>
            <person name="Lu F."/>
            <person name="Nusskern D.R."/>
            <person name="Shue B.C."/>
            <person name="Zheng X.H."/>
            <person name="Zhong F."/>
            <person name="Delcher A.L."/>
            <person name="Huson D.H."/>
            <person name="Kravitz S.A."/>
            <person name="Mouchard L."/>
            <person name="Reinert K."/>
            <person name="Remington K.A."/>
            <person name="Clark A.G."/>
            <person name="Waterman M.S."/>
            <person name="Eichler E.E."/>
            <person name="Adams M.D."/>
            <person name="Hunkapiller M.W."/>
            <person name="Myers E.W."/>
            <person name="Venter J.C."/>
        </authorList>
    </citation>
    <scope>NUCLEOTIDE SEQUENCE [LARGE SCALE GENOMIC DNA]</scope>
</reference>
<reference key="7">
    <citation type="journal article" date="2004" name="Genome Res.">
        <title>The status, quality, and expansion of the NIH full-length cDNA project: the Mammalian Gene Collection (MGC).</title>
        <authorList>
            <consortium name="The MGC Project Team"/>
        </authorList>
    </citation>
    <scope>NUCLEOTIDE SEQUENCE [LARGE SCALE MRNA] (ISOFORM 1)</scope>
    <source>
        <tissue>Lung</tissue>
    </source>
</reference>
<reference key="8">
    <citation type="submission" date="1999-01" db="EMBL/GenBank/DDBJ databases">
        <title>An aphidicolin-sensitive fragile site (FRA11C) lies within 100 kb of the putative tumour suppressor gene TSG101 on both human and mouse chromosomes.</title>
        <authorList>
            <person name="Critcher R."/>
            <person name="Palin A.H."/>
            <person name="Zhang J."/>
            <person name="Chin S.F."/>
            <person name="Gayther S.A."/>
            <person name="Li L."/>
            <person name="Cohen S.N."/>
            <person name="Caldas C."/>
            <person name="Farr C.J."/>
        </authorList>
    </citation>
    <scope>NUCLEOTIDE SEQUENCE OF 521-548</scope>
</reference>
<reference key="9">
    <citation type="journal article" date="1998" name="J. Biol. Chem.">
        <title>Immunoaffinity purification and functional characterization of human transcription factor IIH and RNA polymerase II from clonal cell lines that conditionally express epitope-tagged subunits of the multiprotein complexes.</title>
        <authorList>
            <person name="Kershnar E."/>
            <person name="Wu S.-Y."/>
            <person name="Chiang C.-M."/>
        </authorList>
    </citation>
    <scope>IDENTIFICATION IN THE TFIIH BASAL TRANSCRIPTION FACTOR</scope>
</reference>
<reference key="10">
    <citation type="journal article" date="1999" name="Mol. Cell">
        <title>Reconstitution of the transcription factor TFIIH: assignment of functions for the three enzymatic subunits, XPB, XPD, and cdk7.</title>
        <authorList>
            <person name="Tirode F."/>
            <person name="Busso D."/>
            <person name="Coin F."/>
            <person name="Egly J.-M."/>
        </authorList>
    </citation>
    <scope>FUNCTION</scope>
    <scope>SUBUNIT</scope>
</reference>
<reference key="11">
    <citation type="journal article" date="2000" name="Mol. Cell">
        <title>The FBP interacting repressor targets TFIIH to inhibit activated transcription.</title>
        <authorList>
            <person name="Liu J."/>
            <person name="He L."/>
            <person name="Collins I."/>
            <person name="Ge H."/>
            <person name="Libutti D."/>
            <person name="Li J."/>
            <person name="Egly J.-M."/>
            <person name="Levens D."/>
        </authorList>
    </citation>
    <scope>INTERACTION WITH PUF60</scope>
</reference>
<reference key="12">
    <citation type="journal article" date="2009" name="Anal. Chem.">
        <title>Lys-N and trypsin cover complementary parts of the phosphoproteome in a refined SCX-based approach.</title>
        <authorList>
            <person name="Gauci S."/>
            <person name="Helbig A.O."/>
            <person name="Slijper M."/>
            <person name="Krijgsveld J."/>
            <person name="Heck A.J."/>
            <person name="Mohammed S."/>
        </authorList>
    </citation>
    <scope>IDENTIFICATION BY MASS SPECTROMETRY [LARGE SCALE ANALYSIS]</scope>
</reference>
<reference key="13">
    <citation type="journal article" date="2011" name="BMC Syst. Biol.">
        <title>Initial characterization of the human central proteome.</title>
        <authorList>
            <person name="Burkard T.R."/>
            <person name="Planyavsky M."/>
            <person name="Kaupe I."/>
            <person name="Breitwieser F.P."/>
            <person name="Buerckstuemmer T."/>
            <person name="Bennett K.L."/>
            <person name="Superti-Furga G."/>
            <person name="Colinge J."/>
        </authorList>
    </citation>
    <scope>IDENTIFICATION BY MASS SPECTROMETRY [LARGE SCALE ANALYSIS]</scope>
</reference>
<reference key="14">
    <citation type="journal article" date="2013" name="J. Proteome Res.">
        <title>Toward a comprehensive characterization of a human cancer cell phosphoproteome.</title>
        <authorList>
            <person name="Zhou H."/>
            <person name="Di Palma S."/>
            <person name="Preisinger C."/>
            <person name="Peng M."/>
            <person name="Polat A.N."/>
            <person name="Heck A.J."/>
            <person name="Mohammed S."/>
        </authorList>
    </citation>
    <scope>PHOSPHORYLATION [LARGE SCALE ANALYSIS] AT SER-339 AND SER-357</scope>
    <scope>IDENTIFICATION BY MASS SPECTROMETRY [LARGE SCALE ANALYSIS]</scope>
    <source>
        <tissue>Erythroleukemia</tissue>
    </source>
</reference>
<reference key="15">
    <citation type="journal article" date="2015" name="Proc. Natl. Acad. Sci. U.S.A.">
        <title>A OmegaXaV motif in the Rift Valley fever virus NSs protein is essential for degrading p62, forming nuclear filaments and virulence.</title>
        <authorList>
            <person name="Cyr N."/>
            <person name="de la Fuente C."/>
            <person name="Lecoq L."/>
            <person name="Guendel I."/>
            <person name="Chabot P.R."/>
            <person name="Kehn-Hall K."/>
            <person name="Omichinski J.G."/>
        </authorList>
    </citation>
    <scope>INTERACTION WITH RIFT VALLEY FEVER VIRUS NSS (MICROBIAL INFECTION)</scope>
</reference>
<reference key="16">
    <citation type="journal article" date="2024" name="Cell">
        <title>Rift Valley fever virus coordinates the assembly of a programmable E3 ligase to promote viral replication.</title>
        <authorList>
            <person name="Li H."/>
            <person name="Zhang Y."/>
            <person name="Rao G."/>
            <person name="Zhang C."/>
            <person name="Guan Z."/>
            <person name="Huang Z."/>
            <person name="Li S."/>
            <person name="Lozach P.Y."/>
            <person name="Cao S."/>
            <person name="Peng K."/>
        </authorList>
    </citation>
    <scope>INTERACTION WITH RIFT VALLEY FEVER VIRUS NSS (MICROBIAL INFECTION)</scope>
    <scope>UBIQUITINATION (MICROBIAL INFECTION)</scope>
</reference>
<reference key="17">
    <citation type="submission" date="2006-09" db="PDB data bank">
        <title>Solution structure of the BSD domain of human TFIIH basal transcription factor complex p62 subunit.</title>
        <authorList>
            <consortium name="RIKEN structural genomics initiative (RSGI)"/>
        </authorList>
    </citation>
    <scope>STRUCTURE BY NMR OF 103-155</scope>
</reference>
<reference evidence="13 14 15 16 17" key="18">
    <citation type="journal article" date="2021" name="Nature">
        <title>Structures of mammalian RNA polymerase II pre-initiation complexes.</title>
        <authorList>
            <person name="Aibara S."/>
            <person name="Schilbach S."/>
            <person name="Cramer P."/>
        </authorList>
    </citation>
    <scope>STRUCTURE BY ELECTRON MICROSCOPY (2.90 ANGSTROMS) OF PRE-INITIATION COMPLEXES WITH PIG POLYMERASE II</scope>
</reference>
<organism>
    <name type="scientific">Homo sapiens</name>
    <name type="common">Human</name>
    <dbReference type="NCBI Taxonomy" id="9606"/>
    <lineage>
        <taxon>Eukaryota</taxon>
        <taxon>Metazoa</taxon>
        <taxon>Chordata</taxon>
        <taxon>Craniata</taxon>
        <taxon>Vertebrata</taxon>
        <taxon>Euteleostomi</taxon>
        <taxon>Mammalia</taxon>
        <taxon>Eutheria</taxon>
        <taxon>Euarchontoglires</taxon>
        <taxon>Primates</taxon>
        <taxon>Haplorrhini</taxon>
        <taxon>Catarrhini</taxon>
        <taxon>Hominidae</taxon>
        <taxon>Homo</taxon>
    </lineage>
</organism>
<accession>P32780</accession>
<accession>B3KXE0</accession>
<accession>D3DQY2</accession>
<accession>Q6I9Y7</accession>
<accession>Q9H5K5</accession>
<accession>Q9NQD9</accession>
<proteinExistence type="evidence at protein level"/>
<evidence type="ECO:0000250" key="1">
    <source>
        <dbReference type="UniProtKB" id="Q9DBA9"/>
    </source>
</evidence>
<evidence type="ECO:0000255" key="2">
    <source>
        <dbReference type="PROSITE-ProRule" id="PRU00036"/>
    </source>
</evidence>
<evidence type="ECO:0000256" key="3">
    <source>
        <dbReference type="SAM" id="MobiDB-lite"/>
    </source>
</evidence>
<evidence type="ECO:0000269" key="4">
    <source>
    </source>
</evidence>
<evidence type="ECO:0000269" key="5">
    <source>
    </source>
</evidence>
<evidence type="ECO:0000269" key="6">
    <source>
    </source>
</evidence>
<evidence type="ECO:0000269" key="7">
    <source>
    </source>
</evidence>
<evidence type="ECO:0000269" key="8">
    <source>
    </source>
</evidence>
<evidence type="ECO:0000269" key="9">
    <source ref="3"/>
</evidence>
<evidence type="ECO:0000303" key="10">
    <source>
    </source>
</evidence>
<evidence type="ECO:0000305" key="11"/>
<evidence type="ECO:0000312" key="12">
    <source>
        <dbReference type="HGNC" id="HGNC:4655"/>
    </source>
</evidence>
<evidence type="ECO:0007744" key="13">
    <source>
        <dbReference type="PDB" id="7NVW"/>
    </source>
</evidence>
<evidence type="ECO:0007744" key="14">
    <source>
        <dbReference type="PDB" id="7NVX"/>
    </source>
</evidence>
<evidence type="ECO:0007744" key="15">
    <source>
        <dbReference type="PDB" id="7NVY"/>
    </source>
</evidence>
<evidence type="ECO:0007744" key="16">
    <source>
        <dbReference type="PDB" id="7NVZ"/>
    </source>
</evidence>
<evidence type="ECO:0007744" key="17">
    <source>
        <dbReference type="PDB" id="7NW0"/>
    </source>
</evidence>
<evidence type="ECO:0007744" key="18">
    <source>
    </source>
</evidence>
<evidence type="ECO:0007829" key="19">
    <source>
        <dbReference type="PDB" id="1PFJ"/>
    </source>
</evidence>
<evidence type="ECO:0007829" key="20">
    <source>
        <dbReference type="PDB" id="2DII"/>
    </source>
</evidence>
<evidence type="ECO:0007829" key="21">
    <source>
        <dbReference type="PDB" id="2RNR"/>
    </source>
</evidence>
<evidence type="ECO:0007829" key="22">
    <source>
        <dbReference type="PDB" id="2RVB"/>
    </source>
</evidence>
<evidence type="ECO:0007829" key="23">
    <source>
        <dbReference type="PDB" id="7AD8"/>
    </source>
</evidence>
<evidence type="ECO:0007829" key="24">
    <source>
        <dbReference type="PDB" id="7BUL"/>
    </source>
</evidence>
<evidence type="ECO:0007829" key="25">
    <source>
        <dbReference type="PDB" id="8EBU"/>
    </source>
</evidence>
<name>TF2H1_HUMAN</name>
<dbReference type="EMBL" id="M95809">
    <property type="protein sequence ID" value="AAA58399.1"/>
    <property type="molecule type" value="mRNA"/>
</dbReference>
<dbReference type="EMBL" id="AK027003">
    <property type="protein sequence ID" value="BAB15621.1"/>
    <property type="molecule type" value="mRNA"/>
</dbReference>
<dbReference type="EMBL" id="AK127204">
    <property type="protein sequence ID" value="BAG54452.1"/>
    <property type="molecule type" value="mRNA"/>
</dbReference>
<dbReference type="EMBL" id="AY163770">
    <property type="protein sequence ID" value="AAN46740.1"/>
    <property type="molecule type" value="Genomic_DNA"/>
</dbReference>
<dbReference type="EMBL" id="CR457368">
    <property type="protein sequence ID" value="CAG33649.1"/>
    <property type="molecule type" value="mRNA"/>
</dbReference>
<dbReference type="EMBL" id="AC084117">
    <property type="status" value="NOT_ANNOTATED_CDS"/>
    <property type="molecule type" value="Genomic_DNA"/>
</dbReference>
<dbReference type="EMBL" id="CH471064">
    <property type="protein sequence ID" value="EAW68399.1"/>
    <property type="molecule type" value="Genomic_DNA"/>
</dbReference>
<dbReference type="EMBL" id="CH471064">
    <property type="protein sequence ID" value="EAW68400.1"/>
    <property type="molecule type" value="Genomic_DNA"/>
</dbReference>
<dbReference type="EMBL" id="CH471064">
    <property type="protein sequence ID" value="EAW68401.1"/>
    <property type="molecule type" value="Genomic_DNA"/>
</dbReference>
<dbReference type="EMBL" id="BC000365">
    <property type="protein sequence ID" value="AAH00365.1"/>
    <property type="molecule type" value="mRNA"/>
</dbReference>
<dbReference type="EMBL" id="BC004452">
    <property type="protein sequence ID" value="AAH04452.1"/>
    <property type="molecule type" value="mRNA"/>
</dbReference>
<dbReference type="EMBL" id="AJ131959">
    <property type="protein sequence ID" value="CAC00685.1"/>
    <property type="molecule type" value="Genomic_DNA"/>
</dbReference>
<dbReference type="CCDS" id="CCDS7838.1">
    <molecule id="P32780-1"/>
</dbReference>
<dbReference type="PIR" id="S27958">
    <property type="entry name" value="S27958"/>
</dbReference>
<dbReference type="RefSeq" id="NP_001135779.1">
    <molecule id="P32780-1"/>
    <property type="nucleotide sequence ID" value="NM_001142307.2"/>
</dbReference>
<dbReference type="RefSeq" id="NP_005307.1">
    <molecule id="P32780-1"/>
    <property type="nucleotide sequence ID" value="NM_005316.4"/>
</dbReference>
<dbReference type="RefSeq" id="XP_006718271.1">
    <molecule id="P32780-1"/>
    <property type="nucleotide sequence ID" value="XM_006718208.4"/>
</dbReference>
<dbReference type="RefSeq" id="XP_024304225.1">
    <molecule id="P32780-1"/>
    <property type="nucleotide sequence ID" value="XM_024448457.2"/>
</dbReference>
<dbReference type="RefSeq" id="XP_024304226.1">
    <molecule id="P32780-1"/>
    <property type="nucleotide sequence ID" value="XM_024448458.2"/>
</dbReference>
<dbReference type="RefSeq" id="XP_054188499.1">
    <molecule id="P32780-1"/>
    <property type="nucleotide sequence ID" value="XM_054332524.1"/>
</dbReference>
<dbReference type="RefSeq" id="XP_054188500.1">
    <molecule id="P32780-1"/>
    <property type="nucleotide sequence ID" value="XM_054332525.1"/>
</dbReference>
<dbReference type="RefSeq" id="XP_054188501.1">
    <molecule id="P32780-1"/>
    <property type="nucleotide sequence ID" value="XM_054332526.1"/>
</dbReference>
<dbReference type="RefSeq" id="XP_054224561.1">
    <molecule id="P32780-1"/>
    <property type="nucleotide sequence ID" value="XM_054368586.1"/>
</dbReference>
<dbReference type="RefSeq" id="XP_054224562.1">
    <molecule id="P32780-1"/>
    <property type="nucleotide sequence ID" value="XM_054368587.1"/>
</dbReference>
<dbReference type="RefSeq" id="XP_054224563.1">
    <molecule id="P32780-1"/>
    <property type="nucleotide sequence ID" value="XM_054368588.1"/>
</dbReference>
<dbReference type="PDB" id="1PFJ">
    <property type="method" value="NMR"/>
    <property type="chains" value="A=1-108"/>
</dbReference>
<dbReference type="PDB" id="2DII">
    <property type="method" value="NMR"/>
    <property type="chains" value="A=103-150"/>
</dbReference>
<dbReference type="PDB" id="2RNR">
    <property type="method" value="NMR"/>
    <property type="chains" value="B=1-108"/>
</dbReference>
<dbReference type="PDB" id="2RUK">
    <property type="method" value="NMR"/>
    <property type="chains" value="B=1-108"/>
</dbReference>
<dbReference type="PDB" id="2RVB">
    <property type="method" value="NMR"/>
    <property type="chains" value="B=1-108"/>
</dbReference>
<dbReference type="PDB" id="5GOW">
    <property type="method" value="NMR"/>
    <property type="chains" value="B=1-108"/>
</dbReference>
<dbReference type="PDB" id="5XV8">
    <property type="method" value="NMR"/>
    <property type="chains" value="B=2-108"/>
</dbReference>
<dbReference type="PDB" id="6NMI">
    <property type="method" value="EM"/>
    <property type="resolution" value="3.70 A"/>
    <property type="chains" value="C=1-539"/>
</dbReference>
<dbReference type="PDB" id="6O9L">
    <property type="method" value="EM"/>
    <property type="resolution" value="7.20 A"/>
    <property type="chains" value="1=1-548"/>
</dbReference>
<dbReference type="PDB" id="6O9M">
    <property type="method" value="EM"/>
    <property type="resolution" value="4.40 A"/>
    <property type="chains" value="1=1-548"/>
</dbReference>
<dbReference type="PDB" id="7AD8">
    <property type="method" value="EM"/>
    <property type="resolution" value="3.50 A"/>
    <property type="chains" value="I=1-548"/>
</dbReference>
<dbReference type="PDB" id="7BUL">
    <property type="method" value="NMR"/>
    <property type="chains" value="A=1-158"/>
</dbReference>
<dbReference type="PDB" id="7DTI">
    <property type="method" value="NMR"/>
    <property type="chains" value="B=1-108"/>
</dbReference>
<dbReference type="PDB" id="7EGB">
    <property type="method" value="EM"/>
    <property type="resolution" value="3.30 A"/>
    <property type="chains" value="1=1-548"/>
</dbReference>
<dbReference type="PDB" id="7EGC">
    <property type="method" value="EM"/>
    <property type="resolution" value="3.90 A"/>
    <property type="chains" value="1=1-548"/>
</dbReference>
<dbReference type="PDB" id="7ENA">
    <property type="method" value="EM"/>
    <property type="resolution" value="4.07 A"/>
    <property type="chains" value="1=1-548"/>
</dbReference>
<dbReference type="PDB" id="7ENC">
    <property type="method" value="EM"/>
    <property type="resolution" value="4.13 A"/>
    <property type="chains" value="1=1-548"/>
</dbReference>
<dbReference type="PDB" id="7LBM">
    <property type="method" value="EM"/>
    <property type="resolution" value="4.80 A"/>
    <property type="chains" value="Y=1-548"/>
</dbReference>
<dbReference type="PDB" id="7NVR">
    <property type="method" value="EM"/>
    <property type="resolution" value="4.50 A"/>
    <property type="chains" value="1=1-548"/>
</dbReference>
<dbReference type="PDB" id="7NVW">
    <property type="method" value="EM"/>
    <property type="resolution" value="4.30 A"/>
    <property type="chains" value="1=1-548"/>
</dbReference>
<dbReference type="PDB" id="7NVX">
    <property type="method" value="EM"/>
    <property type="resolution" value="3.90 A"/>
    <property type="chains" value="1=1-548"/>
</dbReference>
<dbReference type="PDB" id="7NVY">
    <property type="method" value="EM"/>
    <property type="resolution" value="7.30 A"/>
    <property type="chains" value="1=1-548"/>
</dbReference>
<dbReference type="PDB" id="7NVZ">
    <property type="method" value="EM"/>
    <property type="resolution" value="7.20 A"/>
    <property type="chains" value="1=1-548"/>
</dbReference>
<dbReference type="PDB" id="7NW0">
    <property type="method" value="EM"/>
    <property type="resolution" value="6.60 A"/>
    <property type="chains" value="1=1-548"/>
</dbReference>
<dbReference type="PDB" id="8BVW">
    <property type="method" value="EM"/>
    <property type="resolution" value="4.00 A"/>
    <property type="chains" value="2=1-548"/>
</dbReference>
<dbReference type="PDB" id="8BYQ">
    <property type="method" value="EM"/>
    <property type="resolution" value="4.10 A"/>
    <property type="chains" value="2=1-548"/>
</dbReference>
<dbReference type="PDB" id="8EBS">
    <property type="method" value="EM"/>
    <property type="resolution" value="4.00 A"/>
    <property type="chains" value="C=1-548"/>
</dbReference>
<dbReference type="PDB" id="8EBT">
    <property type="method" value="EM"/>
    <property type="resolution" value="3.90 A"/>
    <property type="chains" value="C=111-548"/>
</dbReference>
<dbReference type="PDB" id="8EBU">
    <property type="method" value="EM"/>
    <property type="resolution" value="3.30 A"/>
    <property type="chains" value="C=1-548"/>
</dbReference>
<dbReference type="PDB" id="8EBV">
    <property type="method" value="EM"/>
    <property type="resolution" value="7.10 A"/>
    <property type="chains" value="C=1-548"/>
</dbReference>
<dbReference type="PDB" id="8EBW">
    <property type="method" value="EM"/>
    <property type="resolution" value="5.60 A"/>
    <property type="chains" value="C=1-548"/>
</dbReference>
<dbReference type="PDB" id="8EBX">
    <property type="method" value="EM"/>
    <property type="resolution" value="3.60 A"/>
    <property type="chains" value="C=1-548"/>
</dbReference>
<dbReference type="PDB" id="8EBY">
    <property type="method" value="EM"/>
    <property type="resolution" value="3.60 A"/>
    <property type="chains" value="C=1-548"/>
</dbReference>
<dbReference type="PDB" id="8GXQ">
    <property type="method" value="EM"/>
    <property type="resolution" value="5.04 A"/>
    <property type="chains" value="HB=1-548"/>
</dbReference>
<dbReference type="PDB" id="8GXS">
    <property type="method" value="EM"/>
    <property type="resolution" value="4.16 A"/>
    <property type="chains" value="HB=1-548"/>
</dbReference>
<dbReference type="PDB" id="8WAK">
    <property type="method" value="EM"/>
    <property type="resolution" value="5.47 A"/>
    <property type="chains" value="1=1-548"/>
</dbReference>
<dbReference type="PDB" id="8WAL">
    <property type="method" value="EM"/>
    <property type="resolution" value="8.52 A"/>
    <property type="chains" value="1=1-548"/>
</dbReference>
<dbReference type="PDB" id="8WAN">
    <property type="method" value="EM"/>
    <property type="resolution" value="6.07 A"/>
    <property type="chains" value="1=1-548"/>
</dbReference>
<dbReference type="PDB" id="8WAO">
    <property type="method" value="EM"/>
    <property type="resolution" value="6.40 A"/>
    <property type="chains" value="1=1-548"/>
</dbReference>
<dbReference type="PDB" id="8WAP">
    <property type="method" value="EM"/>
    <property type="resolution" value="5.85 A"/>
    <property type="chains" value="1=1-548"/>
</dbReference>
<dbReference type="PDB" id="8WAQ">
    <property type="method" value="EM"/>
    <property type="resolution" value="6.29 A"/>
    <property type="chains" value="1=1-548"/>
</dbReference>
<dbReference type="PDB" id="8WAR">
    <property type="method" value="EM"/>
    <property type="resolution" value="7.20 A"/>
    <property type="chains" value="1=1-548"/>
</dbReference>
<dbReference type="PDB" id="8WAS">
    <property type="method" value="EM"/>
    <property type="resolution" value="6.13 A"/>
    <property type="chains" value="1=1-548"/>
</dbReference>
<dbReference type="PDBsum" id="1PFJ"/>
<dbReference type="PDBsum" id="2DII"/>
<dbReference type="PDBsum" id="2RNR"/>
<dbReference type="PDBsum" id="2RUK"/>
<dbReference type="PDBsum" id="2RVB"/>
<dbReference type="PDBsum" id="5GOW"/>
<dbReference type="PDBsum" id="5XV8"/>
<dbReference type="PDBsum" id="6NMI"/>
<dbReference type="PDBsum" id="6O9L"/>
<dbReference type="PDBsum" id="6O9M"/>
<dbReference type="PDBsum" id="7AD8"/>
<dbReference type="PDBsum" id="7BUL"/>
<dbReference type="PDBsum" id="7DTI"/>
<dbReference type="PDBsum" id="7EGB"/>
<dbReference type="PDBsum" id="7EGC"/>
<dbReference type="PDBsum" id="7ENA"/>
<dbReference type="PDBsum" id="7ENC"/>
<dbReference type="PDBsum" id="7LBM"/>
<dbReference type="PDBsum" id="7NVR"/>
<dbReference type="PDBsum" id="7NVW"/>
<dbReference type="PDBsum" id="7NVX"/>
<dbReference type="PDBsum" id="7NVY"/>
<dbReference type="PDBsum" id="7NVZ"/>
<dbReference type="PDBsum" id="7NW0"/>
<dbReference type="PDBsum" id="8BVW"/>
<dbReference type="PDBsum" id="8BYQ"/>
<dbReference type="PDBsum" id="8EBS"/>
<dbReference type="PDBsum" id="8EBT"/>
<dbReference type="PDBsum" id="8EBU"/>
<dbReference type="PDBsum" id="8EBV"/>
<dbReference type="PDBsum" id="8EBW"/>
<dbReference type="PDBsum" id="8EBX"/>
<dbReference type="PDBsum" id="8EBY"/>
<dbReference type="PDBsum" id="8GXQ"/>
<dbReference type="PDBsum" id="8GXS"/>
<dbReference type="PDBsum" id="8WAK"/>
<dbReference type="PDBsum" id="8WAL"/>
<dbReference type="PDBsum" id="8WAN"/>
<dbReference type="PDBsum" id="8WAO"/>
<dbReference type="PDBsum" id="8WAP"/>
<dbReference type="PDBsum" id="8WAQ"/>
<dbReference type="PDBsum" id="8WAR"/>
<dbReference type="PDBsum" id="8WAS"/>
<dbReference type="BMRB" id="P32780"/>
<dbReference type="EMDB" id="EMD-0452"/>
<dbReference type="EMDB" id="EMD-12610"/>
<dbReference type="EMDB" id="EMD-12615"/>
<dbReference type="EMDB" id="EMD-12616"/>
<dbReference type="EMDB" id="EMD-12617"/>
<dbReference type="EMDB" id="EMD-12618"/>
<dbReference type="EMDB" id="EMD-12619"/>
<dbReference type="EMDB" id="EMD-16274"/>
<dbReference type="EMDB" id="EMD-16331"/>
<dbReference type="EMDB" id="EMD-23255"/>
<dbReference type="EMDB" id="EMD-27996"/>
<dbReference type="EMDB" id="EMD-27997"/>
<dbReference type="EMDB" id="EMD-27998"/>
<dbReference type="EMDB" id="EMD-27999"/>
<dbReference type="EMDB" id="EMD-28000"/>
<dbReference type="EMDB" id="EMD-28001"/>
<dbReference type="EMDB" id="EMD-28002"/>
<dbReference type="EMDB" id="EMD-29673"/>
<dbReference type="EMDB" id="EMD-29674"/>
<dbReference type="EMDB" id="EMD-31111"/>
<dbReference type="EMDB" id="EMD-31112"/>
<dbReference type="EMDB" id="EMD-31204"/>
<dbReference type="EMDB" id="EMD-31207"/>
<dbReference type="EMDB" id="EMD-34359"/>
<dbReference type="EMDB" id="EMD-34360"/>
<dbReference type="EMDB" id="EMD-37395"/>
<dbReference type="EMDB" id="EMD-37396"/>
<dbReference type="EMDB" id="EMD-37398"/>
<dbReference type="EMDB" id="EMD-37399"/>
<dbReference type="EMDB" id="EMD-37400"/>
<dbReference type="EMDB" id="EMD-37401"/>
<dbReference type="EMDB" id="EMD-37402"/>
<dbReference type="EMDB" id="EMD-37403"/>
<dbReference type="SMR" id="P32780"/>
<dbReference type="BioGRID" id="109220">
    <property type="interactions" value="101"/>
</dbReference>
<dbReference type="ComplexPortal" id="CPX-2395">
    <property type="entry name" value="General transcription factor TFIIH complex"/>
</dbReference>
<dbReference type="CORUM" id="P32780"/>
<dbReference type="DIP" id="DIP-708N"/>
<dbReference type="FunCoup" id="P32780">
    <property type="interactions" value="3509"/>
</dbReference>
<dbReference type="IntAct" id="P32780">
    <property type="interactions" value="53"/>
</dbReference>
<dbReference type="MINT" id="P32780"/>
<dbReference type="STRING" id="9606.ENSP00000265963"/>
<dbReference type="GlyGen" id="P32780">
    <property type="glycosylation" value="3 sites, 1 N-linked glycan (1 site), 1 O-linked glycan (1 site)"/>
</dbReference>
<dbReference type="iPTMnet" id="P32780"/>
<dbReference type="PhosphoSitePlus" id="P32780"/>
<dbReference type="BioMuta" id="GTF2H1"/>
<dbReference type="DMDM" id="416727"/>
<dbReference type="jPOST" id="P32780"/>
<dbReference type="MassIVE" id="P32780"/>
<dbReference type="PaxDb" id="9606-ENSP00000265963"/>
<dbReference type="PeptideAtlas" id="P32780"/>
<dbReference type="ProteomicsDB" id="3810"/>
<dbReference type="ProteomicsDB" id="54882">
    <molecule id="P32780-1"/>
</dbReference>
<dbReference type="Pumba" id="P32780"/>
<dbReference type="Antibodypedia" id="3302">
    <property type="antibodies" value="339 antibodies from 32 providers"/>
</dbReference>
<dbReference type="DNASU" id="2965"/>
<dbReference type="Ensembl" id="ENST00000265963.9">
    <molecule id="P32780-1"/>
    <property type="protein sequence ID" value="ENSP00000265963.4"/>
    <property type="gene ID" value="ENSG00000110768.12"/>
</dbReference>
<dbReference type="Ensembl" id="ENST00000453096.6">
    <molecule id="P32780-1"/>
    <property type="protein sequence ID" value="ENSP00000393638.2"/>
    <property type="gene ID" value="ENSG00000110768.12"/>
</dbReference>
<dbReference type="Ensembl" id="ENST00000534641.5">
    <molecule id="P32780-2"/>
    <property type="protein sequence ID" value="ENSP00000435375.1"/>
    <property type="gene ID" value="ENSG00000110768.12"/>
</dbReference>
<dbReference type="Ensembl" id="ENST00000672527.1">
    <molecule id="P32780-1"/>
    <property type="protein sequence ID" value="ENSP00000500852.1"/>
    <property type="gene ID" value="ENSG00000288114.1"/>
</dbReference>
<dbReference type="Ensembl" id="ENST00000672827.1">
    <molecule id="P32780-1"/>
    <property type="protein sequence ID" value="ENSP00000500178.1"/>
    <property type="gene ID" value="ENSG00000288114.1"/>
</dbReference>
<dbReference type="Ensembl" id="ENST00000672845.1">
    <molecule id="P32780-2"/>
    <property type="protein sequence ID" value="ENSP00000500357.1"/>
    <property type="gene ID" value="ENSG00000288114.1"/>
</dbReference>
<dbReference type="GeneID" id="2965"/>
<dbReference type="KEGG" id="hsa:2965"/>
<dbReference type="MANE-Select" id="ENST00000265963.9">
    <property type="protein sequence ID" value="ENSP00000265963.4"/>
    <property type="RefSeq nucleotide sequence ID" value="NM_005316.4"/>
    <property type="RefSeq protein sequence ID" value="NP_005307.1"/>
</dbReference>
<dbReference type="UCSC" id="uc001moh.3">
    <molecule id="P32780-1"/>
    <property type="organism name" value="human"/>
</dbReference>
<dbReference type="AGR" id="HGNC:4655"/>
<dbReference type="CTD" id="2965"/>
<dbReference type="DisGeNET" id="2965"/>
<dbReference type="GeneCards" id="GTF2H1"/>
<dbReference type="HGNC" id="HGNC:4655">
    <property type="gene designation" value="GTF2H1"/>
</dbReference>
<dbReference type="HPA" id="ENSG00000110768">
    <property type="expression patterns" value="Low tissue specificity"/>
</dbReference>
<dbReference type="MIM" id="189972">
    <property type="type" value="gene"/>
</dbReference>
<dbReference type="neXtProt" id="NX_P32780"/>
<dbReference type="OpenTargets" id="ENSG00000110768"/>
<dbReference type="PharmGKB" id="PA29041"/>
<dbReference type="VEuPathDB" id="HostDB:ENSG00000110768"/>
<dbReference type="eggNOG" id="KOG2074">
    <property type="taxonomic scope" value="Eukaryota"/>
</dbReference>
<dbReference type="GeneTree" id="ENSGT00390000015066"/>
<dbReference type="HOGENOM" id="CLU_037467_0_0_1"/>
<dbReference type="InParanoid" id="P32780"/>
<dbReference type="OMA" id="VCTCELL"/>
<dbReference type="OrthoDB" id="360521at2759"/>
<dbReference type="PAN-GO" id="P32780">
    <property type="GO annotations" value="6 GO annotations based on evolutionary models"/>
</dbReference>
<dbReference type="PhylomeDB" id="P32780"/>
<dbReference type="TreeFam" id="TF314689"/>
<dbReference type="PathwayCommons" id="P32780"/>
<dbReference type="Reactome" id="R-HSA-112382">
    <property type="pathway name" value="Formation of RNA Pol II elongation complex"/>
</dbReference>
<dbReference type="Reactome" id="R-HSA-113418">
    <property type="pathway name" value="Formation of the Early Elongation Complex"/>
</dbReference>
<dbReference type="Reactome" id="R-HSA-167152">
    <property type="pathway name" value="Formation of HIV elongation complex in the absence of HIV Tat"/>
</dbReference>
<dbReference type="Reactome" id="R-HSA-167158">
    <property type="pathway name" value="Formation of the HIV-1 Early Elongation Complex"/>
</dbReference>
<dbReference type="Reactome" id="R-HSA-167160">
    <property type="pathway name" value="RNA Pol II CTD phosphorylation and interaction with CE during HIV infection"/>
</dbReference>
<dbReference type="Reactome" id="R-HSA-167161">
    <property type="pathway name" value="HIV Transcription Initiation"/>
</dbReference>
<dbReference type="Reactome" id="R-HSA-167162">
    <property type="pathway name" value="RNA Polymerase II HIV Promoter Escape"/>
</dbReference>
<dbReference type="Reactome" id="R-HSA-167172">
    <property type="pathway name" value="Transcription of the HIV genome"/>
</dbReference>
<dbReference type="Reactome" id="R-HSA-167200">
    <property type="pathway name" value="Formation of HIV-1 elongation complex containing HIV-1 Tat"/>
</dbReference>
<dbReference type="Reactome" id="R-HSA-167246">
    <property type="pathway name" value="Tat-mediated elongation of the HIV-1 transcript"/>
</dbReference>
<dbReference type="Reactome" id="R-HSA-427413">
    <property type="pathway name" value="NoRC negatively regulates rRNA expression"/>
</dbReference>
<dbReference type="Reactome" id="R-HSA-5696395">
    <property type="pathway name" value="Formation of Incision Complex in GG-NER"/>
</dbReference>
<dbReference type="Reactome" id="R-HSA-5696400">
    <property type="pathway name" value="Dual Incision in GG-NER"/>
</dbReference>
<dbReference type="Reactome" id="R-HSA-674695">
    <property type="pathway name" value="RNA Polymerase II Pre-transcription Events"/>
</dbReference>
<dbReference type="Reactome" id="R-HSA-6781823">
    <property type="pathway name" value="Formation of TC-NER Pre-Incision Complex"/>
</dbReference>
<dbReference type="Reactome" id="R-HSA-6781827">
    <property type="pathway name" value="Transcription-Coupled Nucleotide Excision Repair (TC-NER)"/>
</dbReference>
<dbReference type="Reactome" id="R-HSA-6782135">
    <property type="pathway name" value="Dual incision in TC-NER"/>
</dbReference>
<dbReference type="Reactome" id="R-HSA-6782210">
    <property type="pathway name" value="Gap-filling DNA repair synthesis and ligation in TC-NER"/>
</dbReference>
<dbReference type="Reactome" id="R-HSA-6796648">
    <property type="pathway name" value="TP53 Regulates Transcription of DNA Repair Genes"/>
</dbReference>
<dbReference type="Reactome" id="R-HSA-72086">
    <property type="pathway name" value="mRNA Capping"/>
</dbReference>
<dbReference type="Reactome" id="R-HSA-73762">
    <property type="pathway name" value="RNA Polymerase I Transcription Initiation"/>
</dbReference>
<dbReference type="Reactome" id="R-HSA-73772">
    <property type="pathway name" value="RNA Polymerase I Promoter Escape"/>
</dbReference>
<dbReference type="Reactome" id="R-HSA-73776">
    <property type="pathway name" value="RNA Polymerase II Promoter Escape"/>
</dbReference>
<dbReference type="Reactome" id="R-HSA-73779">
    <property type="pathway name" value="RNA Polymerase II Transcription Pre-Initiation And Promoter Opening"/>
</dbReference>
<dbReference type="Reactome" id="R-HSA-73863">
    <property type="pathway name" value="RNA Polymerase I Transcription Termination"/>
</dbReference>
<dbReference type="Reactome" id="R-HSA-75953">
    <property type="pathway name" value="RNA Polymerase II Transcription Initiation"/>
</dbReference>
<dbReference type="Reactome" id="R-HSA-75955">
    <property type="pathway name" value="RNA Polymerase II Transcription Elongation"/>
</dbReference>
<dbReference type="Reactome" id="R-HSA-76042">
    <property type="pathway name" value="RNA Polymerase II Transcription Initiation And Promoter Clearance"/>
</dbReference>
<dbReference type="Reactome" id="R-HSA-77075">
    <property type="pathway name" value="RNA Pol II CTD phosphorylation and interaction with CE"/>
</dbReference>
<dbReference type="SignaLink" id="P32780"/>
<dbReference type="SIGNOR" id="P32780"/>
<dbReference type="BioGRID-ORCS" id="2965">
    <property type="hits" value="621 hits in 1176 CRISPR screens"/>
</dbReference>
<dbReference type="CD-CODE" id="91857CE7">
    <property type="entry name" value="Nucleolus"/>
</dbReference>
<dbReference type="ChiTaRS" id="GTF2H1">
    <property type="organism name" value="human"/>
</dbReference>
<dbReference type="EvolutionaryTrace" id="P32780"/>
<dbReference type="GeneWiki" id="GTF2H1"/>
<dbReference type="GenomeRNAi" id="2965"/>
<dbReference type="Pharos" id="P32780">
    <property type="development level" value="Tbio"/>
</dbReference>
<dbReference type="PRO" id="PR:P32780"/>
<dbReference type="Proteomes" id="UP000005640">
    <property type="component" value="Chromosome 11"/>
</dbReference>
<dbReference type="RNAct" id="P32780">
    <property type="molecule type" value="protein"/>
</dbReference>
<dbReference type="Bgee" id="ENSG00000110768">
    <property type="expression patterns" value="Expressed in calcaneal tendon and 105 other cell types or tissues"/>
</dbReference>
<dbReference type="ExpressionAtlas" id="P32780">
    <property type="expression patterns" value="baseline and differential"/>
</dbReference>
<dbReference type="GO" id="GO:0005654">
    <property type="term" value="C:nucleoplasm"/>
    <property type="evidence" value="ECO:0000314"/>
    <property type="project" value="HPA"/>
</dbReference>
<dbReference type="GO" id="GO:0000439">
    <property type="term" value="C:transcription factor TFIIH core complex"/>
    <property type="evidence" value="ECO:0000314"/>
    <property type="project" value="UniProtKB"/>
</dbReference>
<dbReference type="GO" id="GO:0005675">
    <property type="term" value="C:transcription factor TFIIH holo complex"/>
    <property type="evidence" value="ECO:0000314"/>
    <property type="project" value="UniProtKB"/>
</dbReference>
<dbReference type="GO" id="GO:0003682">
    <property type="term" value="F:chromatin binding"/>
    <property type="evidence" value="ECO:0007669"/>
    <property type="project" value="Ensembl"/>
</dbReference>
<dbReference type="GO" id="GO:0046966">
    <property type="term" value="F:nuclear thyroid hormone receptor binding"/>
    <property type="evidence" value="ECO:0000353"/>
    <property type="project" value="UniProtKB"/>
</dbReference>
<dbReference type="GO" id="GO:0006281">
    <property type="term" value="P:DNA repair"/>
    <property type="evidence" value="ECO:0000318"/>
    <property type="project" value="GO_Central"/>
</dbReference>
<dbReference type="GO" id="GO:0009755">
    <property type="term" value="P:hormone-mediated signaling pathway"/>
    <property type="evidence" value="ECO:0000303"/>
    <property type="project" value="UniProtKB"/>
</dbReference>
<dbReference type="GO" id="GO:0006289">
    <property type="term" value="P:nucleotide-excision repair"/>
    <property type="evidence" value="ECO:0007669"/>
    <property type="project" value="InterPro"/>
</dbReference>
<dbReference type="GO" id="GO:0045893">
    <property type="term" value="P:positive regulation of DNA-templated transcription"/>
    <property type="evidence" value="ECO:0000314"/>
    <property type="project" value="UniProtKB"/>
</dbReference>
<dbReference type="GO" id="GO:0000079">
    <property type="term" value="P:regulation of cyclin-dependent protein serine/threonine kinase activity"/>
    <property type="evidence" value="ECO:0000304"/>
    <property type="project" value="ProtInc"/>
</dbReference>
<dbReference type="GO" id="GO:0006360">
    <property type="term" value="P:transcription by RNA polymerase I"/>
    <property type="evidence" value="ECO:0000318"/>
    <property type="project" value="GO_Central"/>
</dbReference>
<dbReference type="GO" id="GO:0006366">
    <property type="term" value="P:transcription by RNA polymerase II"/>
    <property type="evidence" value="ECO:0000314"/>
    <property type="project" value="UniProtKB"/>
</dbReference>
<dbReference type="GO" id="GO:0006367">
    <property type="term" value="P:transcription initiation at RNA polymerase II promoter"/>
    <property type="evidence" value="ECO:0000314"/>
    <property type="project" value="UniProtKB"/>
</dbReference>
<dbReference type="CDD" id="cd13229">
    <property type="entry name" value="PH_TFIIH"/>
    <property type="match status" value="1"/>
</dbReference>
<dbReference type="FunFam" id="2.30.29.30:FF:000115">
    <property type="entry name" value="General transcription factor IIH subunit 1"/>
    <property type="match status" value="1"/>
</dbReference>
<dbReference type="Gene3D" id="6.10.140.1200">
    <property type="match status" value="1"/>
</dbReference>
<dbReference type="Gene3D" id="2.30.29.30">
    <property type="entry name" value="Pleckstrin-homology domain (PH domain)/Phosphotyrosine-binding domain (PTB)"/>
    <property type="match status" value="1"/>
</dbReference>
<dbReference type="IDEAL" id="IID00549"/>
<dbReference type="InterPro" id="IPR005607">
    <property type="entry name" value="BSD_dom"/>
</dbReference>
<dbReference type="InterPro" id="IPR035925">
    <property type="entry name" value="BSD_dom_sf"/>
</dbReference>
<dbReference type="InterPro" id="IPR011993">
    <property type="entry name" value="PH-like_dom_sf"/>
</dbReference>
<dbReference type="InterPro" id="IPR027079">
    <property type="entry name" value="Tfb1/GTF2H1"/>
</dbReference>
<dbReference type="InterPro" id="IPR013876">
    <property type="entry name" value="TFIIH_BTF_p62_N"/>
</dbReference>
<dbReference type="PANTHER" id="PTHR12856">
    <property type="entry name" value="TRANSCRIPTION INITIATION FACTOR IIH-RELATED"/>
    <property type="match status" value="1"/>
</dbReference>
<dbReference type="Pfam" id="PF03909">
    <property type="entry name" value="BSD"/>
    <property type="match status" value="1"/>
</dbReference>
<dbReference type="Pfam" id="PF08567">
    <property type="entry name" value="PH_TFIIH"/>
    <property type="match status" value="1"/>
</dbReference>
<dbReference type="SMART" id="SM00751">
    <property type="entry name" value="BSD"/>
    <property type="match status" value="2"/>
</dbReference>
<dbReference type="SUPFAM" id="SSF140383">
    <property type="entry name" value="BSD domain-like"/>
    <property type="match status" value="2"/>
</dbReference>
<dbReference type="SUPFAM" id="SSF50729">
    <property type="entry name" value="PH domain-like"/>
    <property type="match status" value="1"/>
</dbReference>
<dbReference type="PROSITE" id="PS50858">
    <property type="entry name" value="BSD"/>
    <property type="match status" value="2"/>
</dbReference>
<keyword id="KW-0002">3D-structure</keyword>
<keyword id="KW-0007">Acetylation</keyword>
<keyword id="KW-0025">Alternative splicing</keyword>
<keyword id="KW-0227">DNA damage</keyword>
<keyword id="KW-0234">DNA repair</keyword>
<keyword id="KW-0945">Host-virus interaction</keyword>
<keyword id="KW-0539">Nucleus</keyword>
<keyword id="KW-0597">Phosphoprotein</keyword>
<keyword id="KW-1267">Proteomics identification</keyword>
<keyword id="KW-1185">Reference proteome</keyword>
<keyword id="KW-0677">Repeat</keyword>
<keyword id="KW-0804">Transcription</keyword>
<keyword id="KW-0805">Transcription regulation</keyword>
<keyword id="KW-0832">Ubl conjugation</keyword>
<gene>
    <name evidence="12" type="primary">GTF2H1</name>
    <name type="synonym">BTF2</name>
</gene>
<feature type="chain" id="PRO_0000119245" description="General transcription factor IIH subunit 1">
    <location>
        <begin position="1"/>
        <end position="548"/>
    </location>
</feature>
<feature type="domain" description="BSD 1" evidence="2">
    <location>
        <begin position="99"/>
        <end position="154"/>
    </location>
</feature>
<feature type="domain" description="BSD 2" evidence="2">
    <location>
        <begin position="180"/>
        <end position="232"/>
    </location>
</feature>
<feature type="region of interest" description="Disordered" evidence="3">
    <location>
        <begin position="321"/>
        <end position="340"/>
    </location>
</feature>
<feature type="compositionally biased region" description="Polar residues" evidence="3">
    <location>
        <begin position="325"/>
        <end position="337"/>
    </location>
</feature>
<feature type="modified residue" description="N6-acetyllysine" evidence="1">
    <location>
        <position position="240"/>
    </location>
</feature>
<feature type="modified residue" description="Phosphoserine" evidence="18">
    <location>
        <position position="339"/>
    </location>
</feature>
<feature type="modified residue" description="Phosphoserine" evidence="18">
    <location>
        <position position="357"/>
    </location>
</feature>
<feature type="splice variant" id="VSP_056562" description="In isoform 2." evidence="10">
    <location>
        <begin position="1"/>
        <end position="116"/>
    </location>
</feature>
<feature type="sequence variant" id="VAR_014345" description="In dbSNP:rs4150603." evidence="9">
    <original>R</original>
    <variation>W</variation>
    <location>
        <position position="234"/>
    </location>
</feature>
<feature type="sequence variant" id="VAR_014346" description="In dbSNP:rs4150636." evidence="9">
    <original>S</original>
    <variation>F</variation>
    <location>
        <position position="285"/>
    </location>
</feature>
<feature type="sequence variant" id="VAR_014347" description="In dbSNP:rs4150665." evidence="9">
    <original>L</original>
    <variation>V</variation>
    <location>
        <position position="517"/>
    </location>
</feature>
<feature type="sequence conflict" description="In Ref. 2; BAB15621." evidence="11" ref="2">
    <original>S</original>
    <variation>P</variation>
    <location>
        <position position="292"/>
    </location>
</feature>
<feature type="sequence conflict" description="In Ref. 2; BAB15621." evidence="11" ref="2">
    <original>G</original>
    <variation>A</variation>
    <location>
        <position position="385"/>
    </location>
</feature>
<feature type="strand" evidence="19">
    <location>
        <begin position="3"/>
        <end position="5"/>
    </location>
</feature>
<feature type="strand" evidence="19">
    <location>
        <begin position="8"/>
        <end position="13"/>
    </location>
</feature>
<feature type="strand" evidence="22">
    <location>
        <begin position="14"/>
        <end position="17"/>
    </location>
</feature>
<feature type="strand" evidence="19">
    <location>
        <begin position="23"/>
        <end position="27"/>
    </location>
</feature>
<feature type="strand" evidence="19">
    <location>
        <begin position="30"/>
        <end position="34"/>
    </location>
</feature>
<feature type="strand" evidence="19">
    <location>
        <begin position="36"/>
        <end position="40"/>
    </location>
</feature>
<feature type="strand" evidence="19">
    <location>
        <begin position="42"/>
        <end position="46"/>
    </location>
</feature>
<feature type="turn" evidence="19">
    <location>
        <begin position="47"/>
        <end position="49"/>
    </location>
</feature>
<feature type="strand" evidence="19">
    <location>
        <begin position="53"/>
        <end position="55"/>
    </location>
</feature>
<feature type="strand" evidence="19">
    <location>
        <begin position="58"/>
        <end position="62"/>
    </location>
</feature>
<feature type="strand" evidence="19">
    <location>
        <begin position="64"/>
        <end position="68"/>
    </location>
</feature>
<feature type="strand" evidence="19">
    <location>
        <begin position="70"/>
        <end position="72"/>
    </location>
</feature>
<feature type="strand" evidence="19">
    <location>
        <begin position="74"/>
        <end position="78"/>
    </location>
</feature>
<feature type="turn" evidence="21">
    <location>
        <begin position="82"/>
        <end position="84"/>
    </location>
</feature>
<feature type="helix" evidence="19">
    <location>
        <begin position="87"/>
        <end position="103"/>
    </location>
</feature>
<feature type="helix" evidence="20">
    <location>
        <begin position="109"/>
        <end position="120"/>
    </location>
</feature>
<feature type="helix" evidence="25">
    <location>
        <begin position="124"/>
        <end position="132"/>
    </location>
</feature>
<feature type="strand" evidence="25">
    <location>
        <begin position="135"/>
        <end position="137"/>
    </location>
</feature>
<feature type="helix" evidence="25">
    <location>
        <begin position="139"/>
        <end position="146"/>
    </location>
</feature>
<feature type="helix" evidence="24">
    <location>
        <begin position="152"/>
        <end position="155"/>
    </location>
</feature>
<feature type="helix" evidence="23">
    <location>
        <begin position="297"/>
        <end position="301"/>
    </location>
</feature>
<feature type="turn" evidence="23">
    <location>
        <begin position="302"/>
        <end position="311"/>
    </location>
</feature>
<feature type="helix" evidence="23">
    <location>
        <begin position="313"/>
        <end position="321"/>
    </location>
</feature>
<feature type="strand" evidence="23">
    <location>
        <begin position="322"/>
        <end position="324"/>
    </location>
</feature>
<feature type="turn" evidence="23">
    <location>
        <begin position="328"/>
        <end position="332"/>
    </location>
</feature>
<feature type="helix" evidence="23">
    <location>
        <begin position="333"/>
        <end position="342"/>
    </location>
</feature>
<feature type="strand" evidence="23">
    <location>
        <begin position="345"/>
        <end position="348"/>
    </location>
</feature>
<feature type="helix" evidence="25">
    <location>
        <begin position="399"/>
        <end position="412"/>
    </location>
</feature>
<feature type="strand" evidence="23">
    <location>
        <begin position="418"/>
        <end position="421"/>
    </location>
</feature>
<feature type="helix" evidence="25">
    <location>
        <begin position="424"/>
        <end position="434"/>
    </location>
</feature>
<feature type="helix" evidence="23">
    <location>
        <begin position="441"/>
        <end position="444"/>
    </location>
</feature>
<feature type="strand" evidence="25">
    <location>
        <begin position="445"/>
        <end position="448"/>
    </location>
</feature>
<feature type="turn" evidence="25">
    <location>
        <begin position="449"/>
        <end position="451"/>
    </location>
</feature>
<feature type="helix" evidence="25">
    <location>
        <begin position="455"/>
        <end position="478"/>
    </location>
</feature>
<feature type="helix" evidence="25">
    <location>
        <begin position="484"/>
        <end position="515"/>
    </location>
</feature>
<feature type="helix" evidence="25">
    <location>
        <begin position="521"/>
        <end position="546"/>
    </location>
</feature>
<sequence>MATSSEEVLLIVKKVRQKKQDGALYLMAERIAWAPEGKDRFTISHMYADIKCQKISPEGKAKIQLQLVLHAGDTTNFHFSNESTAVKERDAVKDLLQQLLPKFKRKANKELEEKNRMLQEDPVLFQLYKDLVVSQVISAEEFWANRLNVNATDSSSTSNHKQDVGISAAFLADVRPQTDGCNGLRYNLTSDIIESIFRTYPAVKMKYAENVPHNMTEKEFWTRFFQSHYFHRDRLNTGSKDLFAECAKIDEKGLKTMVSLGVKNPLLDLTALEDKPLDEGYGISSVPSASNSKSIKENSNAAIIKRFNHHSAMVLAAGLRKQEAQNEQTSEPSNMDGNSGDADCFQPAVKRAKLQESIEYEDLGKNNSVKTIALNLKKSDRYYHGPTPIQSLQYATSQDIINSFQSIRQEMEAYTPKLTQVLSSSAASSTITALSPGGALMQGGTQQAINQMVPNDIQSELKHLYVAVGELLRHFWSCFPVNTPFLEEKVVKMKSNLERFQVTKLCPFQEKIRRQYLSTNLVSHIEEMLQTAYNKLHTWQSRRLMKKT</sequence>